<keyword id="KW-0274">FAD</keyword>
<keyword id="KW-0285">Flavoprotein</keyword>
<keyword id="KW-0325">Glycoprotein</keyword>
<keyword id="KW-0560">Oxidoreductase</keyword>
<keyword id="KW-1185">Reference proteome</keyword>
<keyword id="KW-0732">Signal</keyword>
<organism>
    <name type="scientific">Colletotrichum higginsianum (strain IMI 349063)</name>
    <name type="common">Crucifer anthracnose fungus</name>
    <dbReference type="NCBI Taxonomy" id="759273"/>
    <lineage>
        <taxon>Eukaryota</taxon>
        <taxon>Fungi</taxon>
        <taxon>Dikarya</taxon>
        <taxon>Ascomycota</taxon>
        <taxon>Pezizomycotina</taxon>
        <taxon>Sordariomycetes</taxon>
        <taxon>Hypocreomycetidae</taxon>
        <taxon>Glomerellales</taxon>
        <taxon>Glomerellaceae</taxon>
        <taxon>Colletotrichum</taxon>
        <taxon>Colletotrichum destructivum species complex</taxon>
    </lineage>
</organism>
<feature type="signal peptide" evidence="2">
    <location>
        <begin position="1"/>
        <end position="21"/>
    </location>
</feature>
<feature type="chain" id="PRO_5010497735" description="FAD-dependent oxidoreductase dpchF">
    <location>
        <begin position="22"/>
        <end position="473"/>
    </location>
</feature>
<feature type="glycosylation site" description="N-linked (GlcNAc...) asparagine" evidence="3">
    <location>
        <position position="98"/>
    </location>
</feature>
<feature type="glycosylation site" description="N-linked (GlcNAc...) asparagine" evidence="3">
    <location>
        <position position="128"/>
    </location>
</feature>
<feature type="glycosylation site" description="N-linked (GlcNAc...) asparagine" evidence="3">
    <location>
        <position position="181"/>
    </location>
</feature>
<feature type="glycosylation site" description="N-linked (GlcNAc...) asparagine" evidence="3">
    <location>
        <position position="262"/>
    </location>
</feature>
<feature type="glycosylation site" description="N-linked (GlcNAc...) asparagine" evidence="3">
    <location>
        <position position="330"/>
    </location>
</feature>
<comment type="function">
    <text evidence="4 7">FAD-dependent oxidoreductase; part of the gene cluster that mediates the biosynthesis of the diterpenoid pyrones higginsianins A and B (PubMed:32286350). The first step of the pathway is the synthesis of the alpha-pyrone moiety by the polyketide synthase dpchA via condensation of one acetyl-CoA starter unit with 3 malonyl-CoA units and 2 methylations (Probable). The alpha-pyrone is then combined with geranylgeranyl pyrophosphate (GGPP) formed by the GGPP synthase dpchD through the action of the prenyltransferase dpchC to yield a linear alpha-pyrone diterpenoid (Probable). Subsequent steps in the diterpenoid pyrone biosynthetic pathway involve the decalin core formation, which is initiated by the epoxidation of the C10-C11 olefin by the FAD-dependent oxidoreductase dpchE, and is followed by a cyclization cascade catalyzed by the terpene cyclase dpchB (Probable). The short chain dehydrogenase/reductase dpchG then oxidizes the 8S hydroxy group to a ketone and the short chain dehydrogenase/reductase dpchH reduces the ketone to the 8R hydroxy group to yield higginsianin B (PubMed:32286350). Finally, the FAD-dependent oxidoreductase dpchF converts higginsianin B into higginsianin A (PubMed:32286350).</text>
</comment>
<comment type="cofactor">
    <cofactor evidence="1">
        <name>FAD</name>
        <dbReference type="ChEBI" id="CHEBI:57692"/>
    </cofactor>
</comment>
<comment type="pathway">
    <text evidence="4">Secondary metabolite biosynthesis; terpenoid biosynthesis.</text>
</comment>
<comment type="biotechnology">
    <text evidence="4">Diterpenoid pyrones display various biological activities and higginsianin A shows anti-HIV activity.</text>
</comment>
<comment type="similarity">
    <text evidence="6">Belongs to the beta-cyclopiazonate dehydrogenase family.</text>
</comment>
<proteinExistence type="evidence at protein level"/>
<gene>
    <name evidence="5" type="primary">dpchF</name>
    <name type="ORF">CH063_12564</name>
    <name type="ORF">CH63R_05482</name>
</gene>
<accession>H1VQW0</accession>
<protein>
    <recommendedName>
        <fullName evidence="5">FAD-dependent oxidoreductase dpchF</fullName>
        <ecNumber evidence="4">1.21.-.-</ecNumber>
    </recommendedName>
    <alternativeName>
        <fullName evidence="5">Diterpenoid pyrone biosynthesis cluster protein F</fullName>
    </alternativeName>
</protein>
<reference key="1">
    <citation type="journal article" date="2012" name="Nat. Genet.">
        <title>Lifestyle transitions in plant pathogenic Colletotrichum fungi deciphered by genome and transcriptome analyses.</title>
        <authorList>
            <person name="O'Connell R.J."/>
            <person name="Thon M.R."/>
            <person name="Hacquard S."/>
            <person name="Amyotte S.G."/>
            <person name="Kleemann J."/>
            <person name="Torres M.F."/>
            <person name="Damm U."/>
            <person name="Buiate E.A."/>
            <person name="Epstein L."/>
            <person name="Alkan N."/>
            <person name="Altmueller J."/>
            <person name="Alvarado-Balderrama L."/>
            <person name="Bauser C.A."/>
            <person name="Becker C."/>
            <person name="Birren B.W."/>
            <person name="Chen Z."/>
            <person name="Choi J."/>
            <person name="Crouch J.A."/>
            <person name="Duvick J.P."/>
            <person name="Farman M.A."/>
            <person name="Gan P."/>
            <person name="Heiman D."/>
            <person name="Henrissat B."/>
            <person name="Howard R.J."/>
            <person name="Kabbage M."/>
            <person name="Koch C."/>
            <person name="Kracher B."/>
            <person name="Kubo Y."/>
            <person name="Law A.D."/>
            <person name="Lebrun M.-H."/>
            <person name="Lee Y.-H."/>
            <person name="Miyara I."/>
            <person name="Moore N."/>
            <person name="Neumann U."/>
            <person name="Nordstroem K."/>
            <person name="Panaccione D.G."/>
            <person name="Panstruga R."/>
            <person name="Place M."/>
            <person name="Proctor R.H."/>
            <person name="Prusky D."/>
            <person name="Rech G."/>
            <person name="Reinhardt R."/>
            <person name="Rollins J.A."/>
            <person name="Rounsley S."/>
            <person name="Schardl C.L."/>
            <person name="Schwartz D.C."/>
            <person name="Shenoy N."/>
            <person name="Shirasu K."/>
            <person name="Sikhakolli U.R."/>
            <person name="Stueber K."/>
            <person name="Sukno S.A."/>
            <person name="Sweigard J.A."/>
            <person name="Takano Y."/>
            <person name="Takahara H."/>
            <person name="Trail F."/>
            <person name="van der Does H.C."/>
            <person name="Voll L.M."/>
            <person name="Will I."/>
            <person name="Young S."/>
            <person name="Zeng Q."/>
            <person name="Zhang J."/>
            <person name="Zhou S."/>
            <person name="Dickman M.B."/>
            <person name="Schulze-Lefert P."/>
            <person name="Ver Loren van Themaat E."/>
            <person name="Ma L.-J."/>
            <person name="Vaillancourt L.J."/>
        </authorList>
    </citation>
    <scope>NUCLEOTIDE SEQUENCE [LARGE SCALE GENOMIC DNA]</scope>
    <source>
        <strain>IMI 349063</strain>
    </source>
</reference>
<reference key="2">
    <citation type="journal article" date="2017" name="BMC Genomics">
        <title>Gapless genome assembly of Colletotrichum higginsianum reveals chromosome structure and association of transposable elements with secondary metabolite gene clusters.</title>
        <authorList>
            <person name="Dallery J.-F."/>
            <person name="Lapalu N."/>
            <person name="Zampounis A."/>
            <person name="Pigne S."/>
            <person name="Luyten I."/>
            <person name="Amselem J."/>
            <person name="Wittenberg A.H.J."/>
            <person name="Zhou S."/>
            <person name="de Queiroz M.V."/>
            <person name="Robin G.P."/>
            <person name="Auger A."/>
            <person name="Hainaut M."/>
            <person name="Henrissat B."/>
            <person name="Kim K.-T."/>
            <person name="Lee Y.-H."/>
            <person name="Lespinet O."/>
            <person name="Schwartz D.C."/>
            <person name="Thon M.R."/>
            <person name="O'Connell R.J."/>
        </authorList>
    </citation>
    <scope>NUCLEOTIDE SEQUENCE [LARGE SCALE GENOMIC DNA]</scope>
    <scope>GENOME REANNOTATION</scope>
    <source>
        <strain>IMI 349063</strain>
    </source>
</reference>
<reference key="3">
    <citation type="journal article" date="2020" name="Nat. Commun.">
        <title>Synthetic biology based construction of biological activity-related library of fungal decalin-containing diterpenoid pyrones.</title>
        <authorList>
            <person name="Tsukada K."/>
            <person name="Shinki S."/>
            <person name="Kaneko A."/>
            <person name="Murakami K."/>
            <person name="Irie K."/>
            <person name="Murai M."/>
            <person name="Miyoshi H."/>
            <person name="Dan S."/>
            <person name="Kawaji K."/>
            <person name="Hayashi H."/>
            <person name="Kodama E.N."/>
            <person name="Hori A."/>
            <person name="Salim E."/>
            <person name="Kuraishi T."/>
            <person name="Hirata N."/>
            <person name="Kanda Y."/>
            <person name="Asai T."/>
        </authorList>
    </citation>
    <scope>FUNCTION</scope>
    <scope>CATALYTIC ACTIVITY</scope>
    <scope>PATHWAY</scope>
    <scope>BIOTECHNOLOGY</scope>
</reference>
<sequence length="473" mass="50041">MKLSFIASPVWALALAQFAAATQVKIDVDVAIFGGGSAGIHAAIQLRDAGATVAVIEKKSQIGGHAETYTDPQGKSTNVGVVVFDNIEVASNYFARLNVSIVRGSPLGTAGPTYTYDFTSGAQIPAVNTSAEAQQQLTAALQSYSTNVLSKYPWIDEGFLVPDPVPEELTIPFGELAQKYNFTALMPTIAMYNYFTGDLSTIPSLYGIKGLGQGALKNLFGSFILPASGKTRDLYDAAAIELGNSVLLNADVVKVQRDVRINSTTTGVTVLIQQPGQPPKLIRARKLLVAAPPTLENVGAFDLTAEERGLISKFSSLGCWASVANVPGLNVTLKNYGVHMPYNQPSIPGPYGFVAYGSPNNFLVTVGLPDAANTAAKGEAVVRQSLATLSAVGAVPADALEKLTFPFSAVHSPYSLRVSAEEIKAGFYSKFLALEGARNTYWTGAVWAGHNSALIWNFNMGTVLPGLKKDLGL</sequence>
<evidence type="ECO:0000250" key="1">
    <source>
        <dbReference type="UniProtKB" id="B8NI10"/>
    </source>
</evidence>
<evidence type="ECO:0000255" key="2"/>
<evidence type="ECO:0000255" key="3">
    <source>
        <dbReference type="PROSITE-ProRule" id="PRU00498"/>
    </source>
</evidence>
<evidence type="ECO:0000269" key="4">
    <source>
    </source>
</evidence>
<evidence type="ECO:0000303" key="5">
    <source>
    </source>
</evidence>
<evidence type="ECO:0000305" key="6"/>
<evidence type="ECO:0000305" key="7">
    <source>
    </source>
</evidence>
<name>DPCHF_COLHI</name>
<dbReference type="EC" id="1.21.-.-" evidence="4"/>
<dbReference type="EMBL" id="LTAN01000004">
    <property type="protein sequence ID" value="OBR09790.1"/>
    <property type="molecule type" value="Genomic_DNA"/>
</dbReference>
<dbReference type="EMBL" id="CACQ02005519">
    <property type="status" value="NOT_ANNOTATED_CDS"/>
    <property type="molecule type" value="Genomic_DNA"/>
</dbReference>
<dbReference type="RefSeq" id="XP_018158307.1">
    <property type="nucleotide sequence ID" value="XM_018300457.1"/>
</dbReference>
<dbReference type="SMR" id="H1VQW0"/>
<dbReference type="GlyCosmos" id="H1VQW0">
    <property type="glycosylation" value="5 sites, No reported glycans"/>
</dbReference>
<dbReference type="EnsemblFungi" id="CCF42616">
    <property type="protein sequence ID" value="CCF42616"/>
    <property type="gene ID" value="CH063_12564"/>
</dbReference>
<dbReference type="GeneID" id="28864564"/>
<dbReference type="KEGG" id="chig:CH63R_05482"/>
<dbReference type="VEuPathDB" id="FungiDB:CH63R_05482"/>
<dbReference type="eggNOG" id="ENOG502R1TU">
    <property type="taxonomic scope" value="Eukaryota"/>
</dbReference>
<dbReference type="HOGENOM" id="CLU_028280_0_0_1"/>
<dbReference type="OrthoDB" id="28095at1028384"/>
<dbReference type="UniPathway" id="UPA00213"/>
<dbReference type="Proteomes" id="UP000007174">
    <property type="component" value="Unassembled WGS sequence"/>
</dbReference>
<dbReference type="Proteomes" id="UP000092177">
    <property type="component" value="Chromosome 4"/>
</dbReference>
<dbReference type="GO" id="GO:0016491">
    <property type="term" value="F:oxidoreductase activity"/>
    <property type="evidence" value="ECO:0007669"/>
    <property type="project" value="UniProtKB-KW"/>
</dbReference>
<dbReference type="GO" id="GO:0016114">
    <property type="term" value="P:terpenoid biosynthetic process"/>
    <property type="evidence" value="ECO:0007669"/>
    <property type="project" value="UniProtKB-UniPathway"/>
</dbReference>
<dbReference type="Gene3D" id="1.10.405.20">
    <property type="match status" value="1"/>
</dbReference>
<dbReference type="Gene3D" id="3.30.70.1990">
    <property type="match status" value="1"/>
</dbReference>
<dbReference type="Gene3D" id="3.50.50.60">
    <property type="entry name" value="FAD/NAD(P)-binding domain"/>
    <property type="match status" value="1"/>
</dbReference>
<dbReference type="InterPro" id="IPR036188">
    <property type="entry name" value="FAD/NAD-bd_sf"/>
</dbReference>
<dbReference type="PANTHER" id="PTHR43734:SF7">
    <property type="entry name" value="4,4'-DIAPONEUROSPORENE OXYGENASE"/>
    <property type="match status" value="1"/>
</dbReference>
<dbReference type="PANTHER" id="PTHR43734">
    <property type="entry name" value="PHYTOENE DESATURASE"/>
    <property type="match status" value="1"/>
</dbReference>
<dbReference type="Pfam" id="PF13450">
    <property type="entry name" value="NAD_binding_8"/>
    <property type="match status" value="1"/>
</dbReference>
<dbReference type="SUPFAM" id="SSF51905">
    <property type="entry name" value="FAD/NAD(P)-binding domain"/>
    <property type="match status" value="1"/>
</dbReference>